<proteinExistence type="evidence at protein level"/>
<comment type="function">
    <text>Non-catalytic component of the RNA exosome complex which has 3'-&gt;5' exoribonuclease activity and participates in a multitude of cellular RNA processing and degradation events. In the nucleus, the RNA exosome complex is involved in proper maturation of stable RNA species such as rRNA, snRNA and snoRNA, in the elimination of RNA processing by-products and non-coding 'pervasive' transcripts, such as antisense RNA species and promoter-upstream transcripts (PROMPTs), and of mRNAs with processing defects, thereby limiting or excluding their export to the cytoplasm. The RNA exosome may be involved in Ig class switch recombination (CSR) and/or Ig variable region somatic hypermutation (SHM) by targeting AICDA deamination activity to transcribed dsDNA substrates. In the cytoplasm, the RNA exosome complex is involved in general mRNA turnover and specifically degrades inherently unstable mRNAs containing AU-rich elements (AREs) within their 3' untranslated regions, and in RNA surveillance pathways, preventing translation of aberrant mRNAs. It seems to be involved in degradation of histone mRNA. The catalytic inactive RNA exosome core complex of 9 subunits (Exo-9) is proposed to play a pivotal role in the binding and presentation of RNA for ribonucleolysis, and to serve as a scaffold for the association with catalytic subunits and accessory proteins or complexes. EXOSC1 as peripheral part of the Exo-9 complex stabilizes the hexameric ring of RNase PH-domain subunits through contacts with EXOSC6 and EXOSC8.</text>
</comment>
<comment type="subunit">
    <text evidence="1 3 4 5 6">Component of the RNA exosome core complex (Exo-9), composed of EXOSC1, EXOSC2, EXOSC3, EXOSC4, EXOSC5, EXOSC6, EXOSC7, EXOSC8 and EXOSC9; within the complex interacts with EXOSC6 (PubMed:29906447, PubMed:30047866). The catalytically inactive RNA exosome core complex (Exo-9) associates with the catalytic subunit EXOSC10/RRP6 (PubMed:11719186, PubMed:20531389, PubMed:29906447). Exo-9 may associate with DIS3 to form the nucleolar exosome complex, or DIS3L to form the cytoplasmic exosome complex (PubMed:11719186, PubMed:20531389, PubMed:29906447). Exo-9 is formed by a hexameric base ring consisting of the heterodimers EXOSC4-EXOSC9, EXOSC5-EXOSC8 and EXOSC6-EXOSC7, and a cap ring consisting of EXOSC1, EXOSC2 and EXOSC3 (PubMed:11719186, PubMed:20531389, PubMed:30047866). The RNA exosome complex associates with cofactors C1D/RRP47, MPHOSPH6/MPP6 and MTREX/MTR4 (PubMed:30047866). Interacts with DDX60 (PubMed:21791617).</text>
</comment>
<comment type="interaction">
    <interactant intactId="EBI-371892">
        <id>Q9Y3B2</id>
    </interactant>
    <interactant intactId="EBI-745641">
        <id>Q96DX5</id>
        <label>ASB9</label>
    </interactant>
    <organismsDiffer>false</organismsDiffer>
    <experiments>3</experiments>
</comment>
<comment type="interaction">
    <interactant intactId="EBI-371892">
        <id>Q9Y3B2</id>
    </interactant>
    <interactant intactId="EBI-742054">
        <id>Q96D03</id>
        <label>DDIT4L</label>
    </interactant>
    <organismsDiffer>false</organismsDiffer>
    <experiments>3</experiments>
</comment>
<comment type="interaction">
    <interactant intactId="EBI-371892">
        <id>Q9Y3B2</id>
    </interactant>
    <interactant intactId="EBI-371823">
        <id>Q9NPD3</id>
        <label>EXOSC4</label>
    </interactant>
    <organismsDiffer>false</organismsDiffer>
    <experiments>12</experiments>
</comment>
<comment type="interaction">
    <interactant intactId="EBI-371892">
        <id>Q9Y3B2</id>
    </interactant>
    <interactant intactId="EBI-371876">
        <id>Q9NQT4</id>
        <label>EXOSC5</label>
    </interactant>
    <organismsDiffer>false</organismsDiffer>
    <experiments>35</experiments>
</comment>
<comment type="interaction">
    <interactant intactId="EBI-371892">
        <id>Q9Y3B2</id>
    </interactant>
    <interactant intactId="EBI-371841">
        <id>Q15024</id>
        <label>EXOSC7</label>
    </interactant>
    <organismsDiffer>false</organismsDiffer>
    <experiments>12</experiments>
</comment>
<comment type="interaction">
    <interactant intactId="EBI-371892">
        <id>Q9Y3B2</id>
    </interactant>
    <interactant intactId="EBI-371922">
        <id>Q96B26</id>
        <label>EXOSC8</label>
    </interactant>
    <organismsDiffer>false</organismsDiffer>
    <experiments>10</experiments>
</comment>
<comment type="interaction">
    <interactant intactId="EBI-371892">
        <id>Q9Y3B2</id>
    </interactant>
    <interactant intactId="EBI-9027502">
        <id>Q719H9</id>
        <label>KCTD1</label>
    </interactant>
    <organismsDiffer>false</organismsDiffer>
    <experiments>6</experiments>
</comment>
<comment type="interaction">
    <interactant intactId="EBI-371892">
        <id>Q9Y3B2</id>
    </interactant>
    <interactant intactId="EBI-739832">
        <id>Q8TBB1</id>
        <label>LNX1</label>
    </interactant>
    <organismsDiffer>false</organismsDiffer>
    <experiments>3</experiments>
</comment>
<comment type="interaction">
    <interactant intactId="EBI-371892">
        <id>Q9Y3B2</id>
    </interactant>
    <interactant intactId="EBI-741896">
        <id>Q9P286</id>
        <label>PAK5</label>
    </interactant>
    <organismsDiffer>false</organismsDiffer>
    <experiments>3</experiments>
</comment>
<comment type="interaction">
    <interactant intactId="EBI-371892">
        <id>Q9Y3B2</id>
    </interactant>
    <interactant intactId="EBI-307352">
        <id>Q04864</id>
        <label>REL</label>
    </interactant>
    <organismsDiffer>false</organismsDiffer>
    <experiments>4</experiments>
</comment>
<comment type="interaction">
    <interactant intactId="EBI-371892">
        <id>Q9Y3B2</id>
    </interactant>
    <interactant intactId="EBI-10829018">
        <id>Q04864-2</id>
        <label>REL</label>
    </interactant>
    <organismsDiffer>false</organismsDiffer>
    <experiments>3</experiments>
</comment>
<comment type="interaction">
    <interactant intactId="EBI-371892">
        <id>Q9Y3B2</id>
    </interactant>
    <interactant intactId="EBI-533224">
        <id>P15884</id>
        <label>TCF4</label>
    </interactant>
    <organismsDiffer>false</organismsDiffer>
    <experiments>4</experiments>
</comment>
<comment type="interaction">
    <interactant intactId="EBI-371892">
        <id>Q9Y3B2</id>
    </interactant>
    <interactant intactId="EBI-2849334">
        <id>P52747</id>
        <label>ZNF143</label>
    </interactant>
    <organismsDiffer>false</organismsDiffer>
    <experiments>3</experiments>
</comment>
<comment type="interaction">
    <interactant intactId="EBI-371892">
        <id>Q9Y3B2</id>
    </interactant>
    <interactant intactId="EBI-7254550">
        <id>P36508</id>
        <label>ZNF76</label>
    </interactant>
    <organismsDiffer>false</organismsDiffer>
    <experiments>3</experiments>
</comment>
<comment type="subcellular location">
    <subcellularLocation>
        <location evidence="2">Nucleus</location>
        <location evidence="2">Nucleolus</location>
    </subcellularLocation>
    <subcellularLocation>
        <location evidence="9">Nucleus</location>
    </subcellularLocation>
    <subcellularLocation>
        <location evidence="9">Cytoplasm</location>
    </subcellularLocation>
</comment>
<comment type="disease" evidence="7">
    <disease id="DI-06093">
        <name>Pontocerebellar hypoplasia 1F</name>
        <acronym>PCH1F</acronym>
        <description>A form of pontocerebellar hypoplasia, a disorder characterized by structural defects of the pons and cerebellum, evident upon brain imaging. PCH1F is an autosomal recessive form characterized by hypotonia, global developmental delay, poor overall growth, and dysmorphic facial features. Brain imaging shows pontocerebellar hypoplasia, thin corpus callosum, cerebral atrophy, and delayed myelination.</description>
        <dbReference type="MIM" id="619304"/>
    </disease>
    <text>The disease is caused by variants affecting the gene represented in this entry.</text>
</comment>
<comment type="similarity">
    <text evidence="8">Belongs to the CSL4 family.</text>
</comment>
<gene>
    <name type="primary">EXOSC1</name>
    <name type="synonym">CSL4</name>
    <name type="ORF">CGI-108</name>
</gene>
<evidence type="ECO:0000269" key="1">
    <source>
    </source>
</evidence>
<evidence type="ECO:0000269" key="2">
    <source>
    </source>
</evidence>
<evidence type="ECO:0000269" key="3">
    <source>
    </source>
</evidence>
<evidence type="ECO:0000269" key="4">
    <source>
    </source>
</evidence>
<evidence type="ECO:0000269" key="5">
    <source>
    </source>
</evidence>
<evidence type="ECO:0000269" key="6">
    <source>
    </source>
</evidence>
<evidence type="ECO:0000269" key="7">
    <source>
    </source>
</evidence>
<evidence type="ECO:0000305" key="8"/>
<evidence type="ECO:0000305" key="9">
    <source>
    </source>
</evidence>
<evidence type="ECO:0007744" key="10">
    <source>
        <dbReference type="PDB" id="2NN6"/>
    </source>
</evidence>
<evidence type="ECO:0007744" key="11">
    <source>
        <dbReference type="PDB" id="6D6Q"/>
    </source>
</evidence>
<evidence type="ECO:0007744" key="12">
    <source>
        <dbReference type="PDB" id="6D6R"/>
    </source>
</evidence>
<evidence type="ECO:0007744" key="13">
    <source>
        <dbReference type="PDB" id="6H25"/>
    </source>
</evidence>
<evidence type="ECO:0007744" key="14">
    <source>
    </source>
</evidence>
<evidence type="ECO:0007744" key="15">
    <source>
    </source>
</evidence>
<evidence type="ECO:0007744" key="16">
    <source>
    </source>
</evidence>
<evidence type="ECO:0007744" key="17">
    <source>
    </source>
</evidence>
<evidence type="ECO:0007829" key="18">
    <source>
        <dbReference type="PDB" id="2NN6"/>
    </source>
</evidence>
<evidence type="ECO:0007829" key="19">
    <source>
        <dbReference type="PDB" id="6D6Q"/>
    </source>
</evidence>
<accession>Q9Y3B2</accession>
<accession>B2R9B3</accession>
<accession>Q5JTH3</accession>
<organism>
    <name type="scientific">Homo sapiens</name>
    <name type="common">Human</name>
    <dbReference type="NCBI Taxonomy" id="9606"/>
    <lineage>
        <taxon>Eukaryota</taxon>
        <taxon>Metazoa</taxon>
        <taxon>Chordata</taxon>
        <taxon>Craniata</taxon>
        <taxon>Vertebrata</taxon>
        <taxon>Euteleostomi</taxon>
        <taxon>Mammalia</taxon>
        <taxon>Eutheria</taxon>
        <taxon>Euarchontoglires</taxon>
        <taxon>Primates</taxon>
        <taxon>Haplorrhini</taxon>
        <taxon>Catarrhini</taxon>
        <taxon>Hominidae</taxon>
        <taxon>Homo</taxon>
    </lineage>
</organism>
<protein>
    <recommendedName>
        <fullName>Exosome complex component CSL4</fullName>
    </recommendedName>
    <alternativeName>
        <fullName>Exosome component 1</fullName>
    </alternativeName>
</protein>
<dbReference type="EMBL" id="AF151866">
    <property type="protein sequence ID" value="AAD34103.1"/>
    <property type="molecule type" value="mRNA"/>
</dbReference>
<dbReference type="EMBL" id="AK313717">
    <property type="protein sequence ID" value="BAG36460.1"/>
    <property type="molecule type" value="mRNA"/>
</dbReference>
<dbReference type="EMBL" id="AL355490">
    <property type="status" value="NOT_ANNOTATED_CDS"/>
    <property type="molecule type" value="Genomic_DNA"/>
</dbReference>
<dbReference type="EMBL" id="CH471066">
    <property type="protein sequence ID" value="EAW49936.1"/>
    <property type="molecule type" value="Genomic_DNA"/>
</dbReference>
<dbReference type="EMBL" id="BC022067">
    <property type="protein sequence ID" value="AAH22067.1"/>
    <property type="molecule type" value="mRNA"/>
</dbReference>
<dbReference type="CCDS" id="CCDS7459.1"/>
<dbReference type="RefSeq" id="NP_001305291.1">
    <property type="nucleotide sequence ID" value="NM_001318362.1"/>
</dbReference>
<dbReference type="RefSeq" id="NP_001305292.1">
    <property type="nucleotide sequence ID" value="NM_001318363.1"/>
</dbReference>
<dbReference type="RefSeq" id="NP_001305293.1">
    <property type="nucleotide sequence ID" value="NM_001318364.1"/>
</dbReference>
<dbReference type="RefSeq" id="NP_001305294.1">
    <property type="nucleotide sequence ID" value="NM_001318365.1"/>
</dbReference>
<dbReference type="RefSeq" id="NP_001305295.1">
    <property type="nucleotide sequence ID" value="NM_001318366.1"/>
</dbReference>
<dbReference type="RefSeq" id="NP_057130.1">
    <property type="nucleotide sequence ID" value="NM_016046.5"/>
</dbReference>
<dbReference type="PDB" id="2NN6">
    <property type="method" value="X-ray"/>
    <property type="resolution" value="3.35 A"/>
    <property type="chains" value="I=1-195"/>
</dbReference>
<dbReference type="PDB" id="6D6Q">
    <property type="method" value="EM"/>
    <property type="resolution" value="3.45 A"/>
    <property type="chains" value="I=1-195"/>
</dbReference>
<dbReference type="PDB" id="6D6R">
    <property type="method" value="EM"/>
    <property type="resolution" value="3.45 A"/>
    <property type="chains" value="I=1-195"/>
</dbReference>
<dbReference type="PDB" id="6H25">
    <property type="method" value="EM"/>
    <property type="resolution" value="3.80 A"/>
    <property type="chains" value="I=1-195"/>
</dbReference>
<dbReference type="PDB" id="9G8M">
    <property type="method" value="EM"/>
    <property type="resolution" value="3.30 A"/>
    <property type="chains" value="J=1-195"/>
</dbReference>
<dbReference type="PDB" id="9G8N">
    <property type="method" value="EM"/>
    <property type="resolution" value="3.70 A"/>
    <property type="chains" value="J=1-195"/>
</dbReference>
<dbReference type="PDB" id="9G8O">
    <property type="method" value="EM"/>
    <property type="resolution" value="3.40 A"/>
    <property type="chains" value="J=1-195"/>
</dbReference>
<dbReference type="PDB" id="9G8P">
    <property type="method" value="EM"/>
    <property type="resolution" value="7.00 A"/>
    <property type="chains" value="J=1-195"/>
</dbReference>
<dbReference type="PDBsum" id="2NN6"/>
<dbReference type="PDBsum" id="6D6Q"/>
<dbReference type="PDBsum" id="6D6R"/>
<dbReference type="PDBsum" id="6H25"/>
<dbReference type="PDBsum" id="9G8M"/>
<dbReference type="PDBsum" id="9G8N"/>
<dbReference type="PDBsum" id="9G8O"/>
<dbReference type="PDBsum" id="9G8P"/>
<dbReference type="EMDB" id="EMD-0127"/>
<dbReference type="EMDB" id="EMD-0128"/>
<dbReference type="EMDB" id="EMD-14515"/>
<dbReference type="EMDB" id="EMD-51132"/>
<dbReference type="EMDB" id="EMD-51133"/>
<dbReference type="EMDB" id="EMD-51134"/>
<dbReference type="EMDB" id="EMD-51135"/>
<dbReference type="EMDB" id="EMD-7808"/>
<dbReference type="EMDB" id="EMD-7809"/>
<dbReference type="SMR" id="Q9Y3B2"/>
<dbReference type="BioGRID" id="119220">
    <property type="interactions" value="120"/>
</dbReference>
<dbReference type="ComplexPortal" id="CPX-476">
    <property type="entry name" value="Nuclear exosome complex, DIS3-EXOSC10 variant"/>
</dbReference>
<dbReference type="ComplexPortal" id="CPX-591">
    <property type="entry name" value="Nucleolar exosome complex, EXOSC10 variant"/>
</dbReference>
<dbReference type="ComplexPortal" id="CPX-592">
    <property type="entry name" value="Cytoplasmic exosome complex, DIS3L variant"/>
</dbReference>
<dbReference type="ComplexPortal" id="CPX-593">
    <property type="entry name" value="Exosome complex, DIS3 variant"/>
</dbReference>
<dbReference type="ComplexPortal" id="CPX-600">
    <property type="entry name" value="Cytoplasmic exosome complex, DIS3L-EXOSC10 variant"/>
</dbReference>
<dbReference type="CORUM" id="Q9Y3B2"/>
<dbReference type="DIP" id="DIP-31261N"/>
<dbReference type="FunCoup" id="Q9Y3B2">
    <property type="interactions" value="3206"/>
</dbReference>
<dbReference type="IntAct" id="Q9Y3B2">
    <property type="interactions" value="78"/>
</dbReference>
<dbReference type="MINT" id="Q9Y3B2"/>
<dbReference type="STRING" id="9606.ENSP00000359939"/>
<dbReference type="GlyGen" id="Q9Y3B2">
    <property type="glycosylation" value="1 site, 1 O-linked glycan (1 site)"/>
</dbReference>
<dbReference type="iPTMnet" id="Q9Y3B2"/>
<dbReference type="PhosphoSitePlus" id="Q9Y3B2"/>
<dbReference type="SwissPalm" id="Q9Y3B2"/>
<dbReference type="BioMuta" id="EXOSC1"/>
<dbReference type="DMDM" id="14285410"/>
<dbReference type="jPOST" id="Q9Y3B2"/>
<dbReference type="MassIVE" id="Q9Y3B2"/>
<dbReference type="PaxDb" id="9606-ENSP00000359939"/>
<dbReference type="PeptideAtlas" id="Q9Y3B2"/>
<dbReference type="ProteomicsDB" id="86000"/>
<dbReference type="Pumba" id="Q9Y3B2"/>
<dbReference type="Antibodypedia" id="30884">
    <property type="antibodies" value="239 antibodies from 25 providers"/>
</dbReference>
<dbReference type="DNASU" id="51013"/>
<dbReference type="Ensembl" id="ENST00000370902.8">
    <property type="protein sequence ID" value="ENSP00000359939.3"/>
    <property type="gene ID" value="ENSG00000171311.13"/>
</dbReference>
<dbReference type="GeneID" id="51013"/>
<dbReference type="KEGG" id="hsa:51013"/>
<dbReference type="MANE-Select" id="ENST00000370902.8">
    <property type="protein sequence ID" value="ENSP00000359939.3"/>
    <property type="RefSeq nucleotide sequence ID" value="NM_016046.5"/>
    <property type="RefSeq protein sequence ID" value="NP_057130.1"/>
</dbReference>
<dbReference type="UCSC" id="uc001kni.4">
    <property type="organism name" value="human"/>
</dbReference>
<dbReference type="AGR" id="HGNC:17286"/>
<dbReference type="CTD" id="51013"/>
<dbReference type="DisGeNET" id="51013"/>
<dbReference type="GeneCards" id="EXOSC1"/>
<dbReference type="HGNC" id="HGNC:17286">
    <property type="gene designation" value="EXOSC1"/>
</dbReference>
<dbReference type="HPA" id="ENSG00000171311">
    <property type="expression patterns" value="Low tissue specificity"/>
</dbReference>
<dbReference type="MalaCards" id="EXOSC1"/>
<dbReference type="MIM" id="606493">
    <property type="type" value="gene"/>
</dbReference>
<dbReference type="MIM" id="619304">
    <property type="type" value="phenotype"/>
</dbReference>
<dbReference type="neXtProt" id="NX_Q9Y3B2"/>
<dbReference type="OpenTargets" id="ENSG00000171311"/>
<dbReference type="PharmGKB" id="PA134900737"/>
<dbReference type="VEuPathDB" id="HostDB:ENSG00000171311"/>
<dbReference type="eggNOG" id="KOG3409">
    <property type="taxonomic scope" value="Eukaryota"/>
</dbReference>
<dbReference type="GeneTree" id="ENSGT00390000015287"/>
<dbReference type="InParanoid" id="Q9Y3B2"/>
<dbReference type="OMA" id="PMVPVGW"/>
<dbReference type="OrthoDB" id="440760at2759"/>
<dbReference type="PAN-GO" id="Q9Y3B2">
    <property type="GO annotations" value="2 GO annotations based on evolutionary models"/>
</dbReference>
<dbReference type="PhylomeDB" id="Q9Y3B2"/>
<dbReference type="TreeFam" id="TF316607"/>
<dbReference type="PathwayCommons" id="Q9Y3B2"/>
<dbReference type="Reactome" id="R-HSA-380994">
    <property type="pathway name" value="ATF4 activates genes in response to endoplasmic reticulum stress"/>
</dbReference>
<dbReference type="Reactome" id="R-HSA-429958">
    <property type="pathway name" value="mRNA decay by 3' to 5' exoribonuclease"/>
</dbReference>
<dbReference type="Reactome" id="R-HSA-450385">
    <property type="pathway name" value="Butyrate Response Factor 1 (BRF1) binds and destabilizes mRNA"/>
</dbReference>
<dbReference type="Reactome" id="R-HSA-450513">
    <property type="pathway name" value="Tristetraprolin (TTP, ZFP36) binds and destabilizes mRNA"/>
</dbReference>
<dbReference type="Reactome" id="R-HSA-450604">
    <property type="pathway name" value="KSRP (KHSRP) binds and destabilizes mRNA"/>
</dbReference>
<dbReference type="Reactome" id="R-HSA-6791226">
    <property type="pathway name" value="Major pathway of rRNA processing in the nucleolus and cytosol"/>
</dbReference>
<dbReference type="SignaLink" id="Q9Y3B2"/>
<dbReference type="SIGNOR" id="Q9Y3B2"/>
<dbReference type="BioGRID-ORCS" id="51013">
    <property type="hits" value="451 hits in 1163 CRISPR screens"/>
</dbReference>
<dbReference type="CD-CODE" id="91857CE7">
    <property type="entry name" value="Nucleolus"/>
</dbReference>
<dbReference type="ChiTaRS" id="EXOSC1">
    <property type="organism name" value="human"/>
</dbReference>
<dbReference type="EvolutionaryTrace" id="Q9Y3B2"/>
<dbReference type="GeneWiki" id="Exosome_component_1"/>
<dbReference type="GenomeRNAi" id="51013"/>
<dbReference type="Pharos" id="Q9Y3B2">
    <property type="development level" value="Tbio"/>
</dbReference>
<dbReference type="PRO" id="PR:Q9Y3B2"/>
<dbReference type="Proteomes" id="UP000005640">
    <property type="component" value="Chromosome 10"/>
</dbReference>
<dbReference type="RNAct" id="Q9Y3B2">
    <property type="molecule type" value="protein"/>
</dbReference>
<dbReference type="Bgee" id="ENSG00000171311">
    <property type="expression patterns" value="Expressed in granulocyte and 180 other cell types or tissues"/>
</dbReference>
<dbReference type="ExpressionAtlas" id="Q9Y3B2">
    <property type="expression patterns" value="baseline and differential"/>
</dbReference>
<dbReference type="GO" id="GO:0005737">
    <property type="term" value="C:cytoplasm"/>
    <property type="evidence" value="ECO:0000318"/>
    <property type="project" value="GO_Central"/>
</dbReference>
<dbReference type="GO" id="GO:0000177">
    <property type="term" value="C:cytoplasmic exosome (RNase complex)"/>
    <property type="evidence" value="ECO:0000303"/>
    <property type="project" value="ComplexPortal"/>
</dbReference>
<dbReference type="GO" id="GO:0005829">
    <property type="term" value="C:cytosol"/>
    <property type="evidence" value="ECO:0000314"/>
    <property type="project" value="ComplexPortal"/>
</dbReference>
<dbReference type="GO" id="GO:0000178">
    <property type="term" value="C:exosome (RNase complex)"/>
    <property type="evidence" value="ECO:0000314"/>
    <property type="project" value="UniProtKB"/>
</dbReference>
<dbReference type="GO" id="GO:0000176">
    <property type="term" value="C:nuclear exosome (RNase complex)"/>
    <property type="evidence" value="ECO:0000318"/>
    <property type="project" value="GO_Central"/>
</dbReference>
<dbReference type="GO" id="GO:0101019">
    <property type="term" value="C:nucleolar exosome (RNase complex)"/>
    <property type="evidence" value="ECO:0000303"/>
    <property type="project" value="ComplexPortal"/>
</dbReference>
<dbReference type="GO" id="GO:0005730">
    <property type="term" value="C:nucleolus"/>
    <property type="evidence" value="ECO:0000314"/>
    <property type="project" value="UniProtKB"/>
</dbReference>
<dbReference type="GO" id="GO:0005654">
    <property type="term" value="C:nucleoplasm"/>
    <property type="evidence" value="ECO:0000304"/>
    <property type="project" value="Reactome"/>
</dbReference>
<dbReference type="GO" id="GO:0005634">
    <property type="term" value="C:nucleus"/>
    <property type="evidence" value="ECO:0000314"/>
    <property type="project" value="ComplexPortal"/>
</dbReference>
<dbReference type="GO" id="GO:0003723">
    <property type="term" value="F:RNA binding"/>
    <property type="evidence" value="ECO:0000303"/>
    <property type="project" value="UniProtKB"/>
</dbReference>
<dbReference type="GO" id="GO:0006401">
    <property type="term" value="P:RNA catabolic process"/>
    <property type="evidence" value="ECO:0000314"/>
    <property type="project" value="ComplexPortal"/>
</dbReference>
<dbReference type="GO" id="GO:0006396">
    <property type="term" value="P:RNA processing"/>
    <property type="evidence" value="ECO:0000314"/>
    <property type="project" value="ComplexPortal"/>
</dbReference>
<dbReference type="GO" id="GO:0006364">
    <property type="term" value="P:rRNA processing"/>
    <property type="evidence" value="ECO:0007669"/>
    <property type="project" value="UniProtKB-KW"/>
</dbReference>
<dbReference type="CDD" id="cd05791">
    <property type="entry name" value="S1_CSL4"/>
    <property type="match status" value="1"/>
</dbReference>
<dbReference type="FunFam" id="2.40.50.100:FF:000024">
    <property type="entry name" value="Exosome complex component CSL4"/>
    <property type="match status" value="1"/>
</dbReference>
<dbReference type="FunFam" id="2.40.50.140:FF:000135">
    <property type="entry name" value="Exosome complex component CSL4"/>
    <property type="match status" value="1"/>
</dbReference>
<dbReference type="Gene3D" id="2.40.50.100">
    <property type="match status" value="1"/>
</dbReference>
<dbReference type="Gene3D" id="2.40.50.140">
    <property type="entry name" value="Nucleic acid-binding proteins"/>
    <property type="match status" value="1"/>
</dbReference>
<dbReference type="InterPro" id="IPR039771">
    <property type="entry name" value="Csl4"/>
</dbReference>
<dbReference type="InterPro" id="IPR019495">
    <property type="entry name" value="EXOSC1_C"/>
</dbReference>
<dbReference type="InterPro" id="IPR025721">
    <property type="entry name" value="Exosome_cplx_N_dom"/>
</dbReference>
<dbReference type="InterPro" id="IPR012340">
    <property type="entry name" value="NA-bd_OB-fold"/>
</dbReference>
<dbReference type="InterPro" id="IPR003029">
    <property type="entry name" value="S1_domain"/>
</dbReference>
<dbReference type="PANTHER" id="PTHR12686">
    <property type="entry name" value="3'-5' EXORIBONUCLEASE CSL4-RELATED"/>
    <property type="match status" value="1"/>
</dbReference>
<dbReference type="PANTHER" id="PTHR12686:SF8">
    <property type="entry name" value="EXOSOME COMPLEX COMPONENT CSL4"/>
    <property type="match status" value="1"/>
</dbReference>
<dbReference type="Pfam" id="PF14382">
    <property type="entry name" value="ECR1_N"/>
    <property type="match status" value="1"/>
</dbReference>
<dbReference type="Pfam" id="PF10447">
    <property type="entry name" value="EXOSC1"/>
    <property type="match status" value="1"/>
</dbReference>
<dbReference type="SMART" id="SM00316">
    <property type="entry name" value="S1"/>
    <property type="match status" value="1"/>
</dbReference>
<dbReference type="SUPFAM" id="SSF50249">
    <property type="entry name" value="Nucleic acid-binding proteins"/>
    <property type="match status" value="1"/>
</dbReference>
<dbReference type="SUPFAM" id="SSF110324">
    <property type="entry name" value="Ribosomal L27 protein-like"/>
    <property type="match status" value="1"/>
</dbReference>
<reference key="1">
    <citation type="journal article" date="2000" name="Genome Res.">
        <title>Identification of novel human genes evolutionarily conserved in Caenorhabditis elegans by comparative proteomics.</title>
        <authorList>
            <person name="Lai C.-H."/>
            <person name="Chou C.-Y."/>
            <person name="Ch'ang L.-Y."/>
            <person name="Liu C.-S."/>
            <person name="Lin W.-C."/>
        </authorList>
    </citation>
    <scope>NUCLEOTIDE SEQUENCE [LARGE SCALE MRNA]</scope>
</reference>
<reference key="2">
    <citation type="journal article" date="2004" name="Nat. Genet.">
        <title>Complete sequencing and characterization of 21,243 full-length human cDNAs.</title>
        <authorList>
            <person name="Ota T."/>
            <person name="Suzuki Y."/>
            <person name="Nishikawa T."/>
            <person name="Otsuki T."/>
            <person name="Sugiyama T."/>
            <person name="Irie R."/>
            <person name="Wakamatsu A."/>
            <person name="Hayashi K."/>
            <person name="Sato H."/>
            <person name="Nagai K."/>
            <person name="Kimura K."/>
            <person name="Makita H."/>
            <person name="Sekine M."/>
            <person name="Obayashi M."/>
            <person name="Nishi T."/>
            <person name="Shibahara T."/>
            <person name="Tanaka T."/>
            <person name="Ishii S."/>
            <person name="Yamamoto J."/>
            <person name="Saito K."/>
            <person name="Kawai Y."/>
            <person name="Isono Y."/>
            <person name="Nakamura Y."/>
            <person name="Nagahari K."/>
            <person name="Murakami K."/>
            <person name="Yasuda T."/>
            <person name="Iwayanagi T."/>
            <person name="Wagatsuma M."/>
            <person name="Shiratori A."/>
            <person name="Sudo H."/>
            <person name="Hosoiri T."/>
            <person name="Kaku Y."/>
            <person name="Kodaira H."/>
            <person name="Kondo H."/>
            <person name="Sugawara M."/>
            <person name="Takahashi M."/>
            <person name="Kanda K."/>
            <person name="Yokoi T."/>
            <person name="Furuya T."/>
            <person name="Kikkawa E."/>
            <person name="Omura Y."/>
            <person name="Abe K."/>
            <person name="Kamihara K."/>
            <person name="Katsuta N."/>
            <person name="Sato K."/>
            <person name="Tanikawa M."/>
            <person name="Yamazaki M."/>
            <person name="Ninomiya K."/>
            <person name="Ishibashi T."/>
            <person name="Yamashita H."/>
            <person name="Murakawa K."/>
            <person name="Fujimori K."/>
            <person name="Tanai H."/>
            <person name="Kimata M."/>
            <person name="Watanabe M."/>
            <person name="Hiraoka S."/>
            <person name="Chiba Y."/>
            <person name="Ishida S."/>
            <person name="Ono Y."/>
            <person name="Takiguchi S."/>
            <person name="Watanabe S."/>
            <person name="Yosida M."/>
            <person name="Hotuta T."/>
            <person name="Kusano J."/>
            <person name="Kanehori K."/>
            <person name="Takahashi-Fujii A."/>
            <person name="Hara H."/>
            <person name="Tanase T.-O."/>
            <person name="Nomura Y."/>
            <person name="Togiya S."/>
            <person name="Komai F."/>
            <person name="Hara R."/>
            <person name="Takeuchi K."/>
            <person name="Arita M."/>
            <person name="Imose N."/>
            <person name="Musashino K."/>
            <person name="Yuuki H."/>
            <person name="Oshima A."/>
            <person name="Sasaki N."/>
            <person name="Aotsuka S."/>
            <person name="Yoshikawa Y."/>
            <person name="Matsunawa H."/>
            <person name="Ichihara T."/>
            <person name="Shiohata N."/>
            <person name="Sano S."/>
            <person name="Moriya S."/>
            <person name="Momiyama H."/>
            <person name="Satoh N."/>
            <person name="Takami S."/>
            <person name="Terashima Y."/>
            <person name="Suzuki O."/>
            <person name="Nakagawa S."/>
            <person name="Senoh A."/>
            <person name="Mizoguchi H."/>
            <person name="Goto Y."/>
            <person name="Shimizu F."/>
            <person name="Wakebe H."/>
            <person name="Hishigaki H."/>
            <person name="Watanabe T."/>
            <person name="Sugiyama A."/>
            <person name="Takemoto M."/>
            <person name="Kawakami B."/>
            <person name="Yamazaki M."/>
            <person name="Watanabe K."/>
            <person name="Kumagai A."/>
            <person name="Itakura S."/>
            <person name="Fukuzumi Y."/>
            <person name="Fujimori Y."/>
            <person name="Komiyama M."/>
            <person name="Tashiro H."/>
            <person name="Tanigami A."/>
            <person name="Fujiwara T."/>
            <person name="Ono T."/>
            <person name="Yamada K."/>
            <person name="Fujii Y."/>
            <person name="Ozaki K."/>
            <person name="Hirao M."/>
            <person name="Ohmori Y."/>
            <person name="Kawabata A."/>
            <person name="Hikiji T."/>
            <person name="Kobatake N."/>
            <person name="Inagaki H."/>
            <person name="Ikema Y."/>
            <person name="Okamoto S."/>
            <person name="Okitani R."/>
            <person name="Kawakami T."/>
            <person name="Noguchi S."/>
            <person name="Itoh T."/>
            <person name="Shigeta K."/>
            <person name="Senba T."/>
            <person name="Matsumura K."/>
            <person name="Nakajima Y."/>
            <person name="Mizuno T."/>
            <person name="Morinaga M."/>
            <person name="Sasaki M."/>
            <person name="Togashi T."/>
            <person name="Oyama M."/>
            <person name="Hata H."/>
            <person name="Watanabe M."/>
            <person name="Komatsu T."/>
            <person name="Mizushima-Sugano J."/>
            <person name="Satoh T."/>
            <person name="Shirai Y."/>
            <person name="Takahashi Y."/>
            <person name="Nakagawa K."/>
            <person name="Okumura K."/>
            <person name="Nagase T."/>
            <person name="Nomura N."/>
            <person name="Kikuchi H."/>
            <person name="Masuho Y."/>
            <person name="Yamashita R."/>
            <person name="Nakai K."/>
            <person name="Yada T."/>
            <person name="Nakamura Y."/>
            <person name="Ohara O."/>
            <person name="Isogai T."/>
            <person name="Sugano S."/>
        </authorList>
    </citation>
    <scope>NUCLEOTIDE SEQUENCE [LARGE SCALE MRNA]</scope>
</reference>
<reference key="3">
    <citation type="journal article" date="2004" name="Nature">
        <title>The DNA sequence and comparative analysis of human chromosome 10.</title>
        <authorList>
            <person name="Deloukas P."/>
            <person name="Earthrowl M.E."/>
            <person name="Grafham D.V."/>
            <person name="Rubenfield M."/>
            <person name="French L."/>
            <person name="Steward C.A."/>
            <person name="Sims S.K."/>
            <person name="Jones M.C."/>
            <person name="Searle S."/>
            <person name="Scott C."/>
            <person name="Howe K."/>
            <person name="Hunt S.E."/>
            <person name="Andrews T.D."/>
            <person name="Gilbert J.G.R."/>
            <person name="Swarbreck D."/>
            <person name="Ashurst J.L."/>
            <person name="Taylor A."/>
            <person name="Battles J."/>
            <person name="Bird C.P."/>
            <person name="Ainscough R."/>
            <person name="Almeida J.P."/>
            <person name="Ashwell R.I.S."/>
            <person name="Ambrose K.D."/>
            <person name="Babbage A.K."/>
            <person name="Bagguley C.L."/>
            <person name="Bailey J."/>
            <person name="Banerjee R."/>
            <person name="Bates K."/>
            <person name="Beasley H."/>
            <person name="Bray-Allen S."/>
            <person name="Brown A.J."/>
            <person name="Brown J.Y."/>
            <person name="Burford D.C."/>
            <person name="Burrill W."/>
            <person name="Burton J."/>
            <person name="Cahill P."/>
            <person name="Camire D."/>
            <person name="Carter N.P."/>
            <person name="Chapman J.C."/>
            <person name="Clark S.Y."/>
            <person name="Clarke G."/>
            <person name="Clee C.M."/>
            <person name="Clegg S."/>
            <person name="Corby N."/>
            <person name="Coulson A."/>
            <person name="Dhami P."/>
            <person name="Dutta I."/>
            <person name="Dunn M."/>
            <person name="Faulkner L."/>
            <person name="Frankish A."/>
            <person name="Frankland J.A."/>
            <person name="Garner P."/>
            <person name="Garnett J."/>
            <person name="Gribble S."/>
            <person name="Griffiths C."/>
            <person name="Grocock R."/>
            <person name="Gustafson E."/>
            <person name="Hammond S."/>
            <person name="Harley J.L."/>
            <person name="Hart E."/>
            <person name="Heath P.D."/>
            <person name="Ho T.P."/>
            <person name="Hopkins B."/>
            <person name="Horne J."/>
            <person name="Howden P.J."/>
            <person name="Huckle E."/>
            <person name="Hynds C."/>
            <person name="Johnson C."/>
            <person name="Johnson D."/>
            <person name="Kana A."/>
            <person name="Kay M."/>
            <person name="Kimberley A.M."/>
            <person name="Kershaw J.K."/>
            <person name="Kokkinaki M."/>
            <person name="Laird G.K."/>
            <person name="Lawlor S."/>
            <person name="Lee H.M."/>
            <person name="Leongamornlert D.A."/>
            <person name="Laird G."/>
            <person name="Lloyd C."/>
            <person name="Lloyd D.M."/>
            <person name="Loveland J."/>
            <person name="Lovell J."/>
            <person name="McLaren S."/>
            <person name="McLay K.E."/>
            <person name="McMurray A."/>
            <person name="Mashreghi-Mohammadi M."/>
            <person name="Matthews L."/>
            <person name="Milne S."/>
            <person name="Nickerson T."/>
            <person name="Nguyen M."/>
            <person name="Overton-Larty E."/>
            <person name="Palmer S.A."/>
            <person name="Pearce A.V."/>
            <person name="Peck A.I."/>
            <person name="Pelan S."/>
            <person name="Phillimore B."/>
            <person name="Porter K."/>
            <person name="Rice C.M."/>
            <person name="Rogosin A."/>
            <person name="Ross M.T."/>
            <person name="Sarafidou T."/>
            <person name="Sehra H.K."/>
            <person name="Shownkeen R."/>
            <person name="Skuce C.D."/>
            <person name="Smith M."/>
            <person name="Standring L."/>
            <person name="Sycamore N."/>
            <person name="Tester J."/>
            <person name="Thorpe A."/>
            <person name="Torcasso W."/>
            <person name="Tracey A."/>
            <person name="Tromans A."/>
            <person name="Tsolas J."/>
            <person name="Wall M."/>
            <person name="Walsh J."/>
            <person name="Wang H."/>
            <person name="Weinstock K."/>
            <person name="West A.P."/>
            <person name="Willey D.L."/>
            <person name="Whitehead S.L."/>
            <person name="Wilming L."/>
            <person name="Wray P.W."/>
            <person name="Young L."/>
            <person name="Chen Y."/>
            <person name="Lovering R.C."/>
            <person name="Moschonas N.K."/>
            <person name="Siebert R."/>
            <person name="Fechtel K."/>
            <person name="Bentley D."/>
            <person name="Durbin R.M."/>
            <person name="Hubbard T."/>
            <person name="Doucette-Stamm L."/>
            <person name="Beck S."/>
            <person name="Smith D.R."/>
            <person name="Rogers J."/>
        </authorList>
    </citation>
    <scope>NUCLEOTIDE SEQUENCE [LARGE SCALE GENOMIC DNA]</scope>
</reference>
<reference key="4">
    <citation type="submission" date="2005-09" db="EMBL/GenBank/DDBJ databases">
        <authorList>
            <person name="Mural R.J."/>
            <person name="Istrail S."/>
            <person name="Sutton G.G."/>
            <person name="Florea L."/>
            <person name="Halpern A.L."/>
            <person name="Mobarry C.M."/>
            <person name="Lippert R."/>
            <person name="Walenz B."/>
            <person name="Shatkay H."/>
            <person name="Dew I."/>
            <person name="Miller J.R."/>
            <person name="Flanigan M.J."/>
            <person name="Edwards N.J."/>
            <person name="Bolanos R."/>
            <person name="Fasulo D."/>
            <person name="Halldorsson B.V."/>
            <person name="Hannenhalli S."/>
            <person name="Turner R."/>
            <person name="Yooseph S."/>
            <person name="Lu F."/>
            <person name="Nusskern D.R."/>
            <person name="Shue B.C."/>
            <person name="Zheng X.H."/>
            <person name="Zhong F."/>
            <person name="Delcher A.L."/>
            <person name="Huson D.H."/>
            <person name="Kravitz S.A."/>
            <person name="Mouchard L."/>
            <person name="Reinert K."/>
            <person name="Remington K.A."/>
            <person name="Clark A.G."/>
            <person name="Waterman M.S."/>
            <person name="Eichler E.E."/>
            <person name="Adams M.D."/>
            <person name="Hunkapiller M.W."/>
            <person name="Myers E.W."/>
            <person name="Venter J.C."/>
        </authorList>
    </citation>
    <scope>NUCLEOTIDE SEQUENCE [LARGE SCALE GENOMIC DNA]</scope>
</reference>
<reference key="5">
    <citation type="journal article" date="2004" name="Genome Res.">
        <title>The status, quality, and expansion of the NIH full-length cDNA project: the Mammalian Gene Collection (MGC).</title>
        <authorList>
            <consortium name="The MGC Project Team"/>
        </authorList>
    </citation>
    <scope>NUCLEOTIDE SEQUENCE [LARGE SCALE MRNA]</scope>
    <source>
        <tissue>Brain</tissue>
    </source>
</reference>
<reference key="6">
    <citation type="journal article" date="2001" name="Cell">
        <title>AU binding proteins recruit the exosome to degrade ARE-containing mRNAs.</title>
        <authorList>
            <person name="Chen C.-Y."/>
            <person name="Gherzi R."/>
            <person name="Ong S.-E."/>
            <person name="Chan E.L."/>
            <person name="Raijmakers R."/>
            <person name="Pruijn G.J.M."/>
            <person name="Stoecklin G."/>
            <person name="Moroni C."/>
            <person name="Mann M."/>
            <person name="Karin M."/>
        </authorList>
    </citation>
    <scope>IDENTIFICATION BY MASS SPECTROMETRY</scope>
    <scope>IDENTIFICATION IN THE RNA EXOSOME CORE COMPLEX</scope>
</reference>
<reference key="7">
    <citation type="journal article" date="2002" name="J. Mol. Biol.">
        <title>Protein-protein interactions between human exosome components support the assembly of RNase PH-type subunits into a six-membered PNPase-like ring.</title>
        <authorList>
            <person name="Raijmakers R."/>
            <person name="Vree Egberts W."/>
            <person name="van Venrooij W.J."/>
            <person name="Pruijn G.J.M."/>
        </authorList>
    </citation>
    <scope>PROTEIN INTERACTION</scope>
</reference>
<reference key="8">
    <citation type="journal article" date="2002" name="J. Mol. Biol.">
        <title>Protein-protein interactions of hCsl4p with other human exosome subunits.</title>
        <authorList>
            <person name="Raijmakers R."/>
            <person name="Noordman Y.E."/>
            <person name="van Venrooij W.J."/>
            <person name="Pruijn G.J.M."/>
        </authorList>
    </citation>
    <scope>SUBCELLULAR LOCATION</scope>
    <scope>INTERACTION WITH EXOSC5; EXOSC7 AND EXOSC10</scope>
</reference>
<reference key="9">
    <citation type="journal article" date="2004" name="Genome Res.">
        <title>A protein interaction framework for human mRNA degradation.</title>
        <authorList>
            <person name="Lehner B."/>
            <person name="Sanderson C.M."/>
        </authorList>
    </citation>
    <scope>PROTEIN INTERACTION</scope>
</reference>
<reference key="10">
    <citation type="journal article" date="2008" name="Mol. Cell">
        <title>Kinase-selective enrichment enables quantitative phosphoproteomics of the kinome across the cell cycle.</title>
        <authorList>
            <person name="Daub H."/>
            <person name="Olsen J.V."/>
            <person name="Bairlein M."/>
            <person name="Gnad F."/>
            <person name="Oppermann F.S."/>
            <person name="Korner R."/>
            <person name="Greff Z."/>
            <person name="Keri G."/>
            <person name="Stemmann O."/>
            <person name="Mann M."/>
        </authorList>
    </citation>
    <scope>PHOSPHORYLATION [LARGE SCALE ANALYSIS] AT SER-21</scope>
    <scope>IDENTIFICATION BY MASS SPECTROMETRY [LARGE SCALE ANALYSIS]</scope>
    <source>
        <tissue>Cervix carcinoma</tissue>
    </source>
</reference>
<reference key="11">
    <citation type="journal article" date="2008" name="Proc. Natl. Acad. Sci. U.S.A.">
        <title>A quantitative atlas of mitotic phosphorylation.</title>
        <authorList>
            <person name="Dephoure N."/>
            <person name="Zhou C."/>
            <person name="Villen J."/>
            <person name="Beausoleil S.A."/>
            <person name="Bakalarski C.E."/>
            <person name="Elledge S.J."/>
            <person name="Gygi S.P."/>
        </authorList>
    </citation>
    <scope>PHOSPHORYLATION [LARGE SCALE ANALYSIS] AT SER-21</scope>
    <scope>IDENTIFICATION BY MASS SPECTROMETRY [LARGE SCALE ANALYSIS]</scope>
    <source>
        <tissue>Cervix carcinoma</tissue>
    </source>
</reference>
<reference key="12">
    <citation type="journal article" date="2010" name="EMBO J.">
        <title>Dis3-like 1: a novel exoribonuclease associated with the human exosome.</title>
        <authorList>
            <person name="Staals R.H."/>
            <person name="Bronkhorst A.W."/>
            <person name="Schilders G."/>
            <person name="Slomovic S."/>
            <person name="Schuster G."/>
            <person name="Heck A.J."/>
            <person name="Raijmakers R."/>
            <person name="Pruijn G.J."/>
        </authorList>
    </citation>
    <scope>IDENTIFICATION IN THE RNA EXOSOME COMPLEX</scope>
    <scope>IDENTIFICATION BY MASS SPECTROMETRY</scope>
</reference>
<reference key="13">
    <citation type="journal article" date="2010" name="Sci. Signal.">
        <title>Quantitative phosphoproteomics reveals widespread full phosphorylation site occupancy during mitosis.</title>
        <authorList>
            <person name="Olsen J.V."/>
            <person name="Vermeulen M."/>
            <person name="Santamaria A."/>
            <person name="Kumar C."/>
            <person name="Miller M.L."/>
            <person name="Jensen L.J."/>
            <person name="Gnad F."/>
            <person name="Cox J."/>
            <person name="Jensen T.S."/>
            <person name="Nigg E.A."/>
            <person name="Brunak S."/>
            <person name="Mann M."/>
        </authorList>
    </citation>
    <scope>PHOSPHORYLATION [LARGE SCALE ANALYSIS] AT SER-21</scope>
    <scope>IDENTIFICATION BY MASS SPECTROMETRY [LARGE SCALE ANALYSIS]</scope>
    <source>
        <tissue>Cervix carcinoma</tissue>
    </source>
</reference>
<reference key="14">
    <citation type="journal article" date="2011" name="BMC Syst. Biol.">
        <title>Initial characterization of the human central proteome.</title>
        <authorList>
            <person name="Burkard T.R."/>
            <person name="Planyavsky M."/>
            <person name="Kaupe I."/>
            <person name="Breitwieser F.P."/>
            <person name="Buerckstuemmer T."/>
            <person name="Bennett K.L."/>
            <person name="Superti-Furga G."/>
            <person name="Colinge J."/>
        </authorList>
    </citation>
    <scope>IDENTIFICATION BY MASS SPECTROMETRY [LARGE SCALE ANALYSIS]</scope>
</reference>
<reference key="15">
    <citation type="journal article" date="2011" name="Mol. Cell. Biol.">
        <title>DDX60, a DEXD/H box helicase, is a novel antiviral factor promoting RIG-I-like receptor-mediated signaling.</title>
        <authorList>
            <person name="Miyashita M."/>
            <person name="Oshiumi H."/>
            <person name="Matsumoto M."/>
            <person name="Seya T."/>
        </authorList>
    </citation>
    <scope>INTERACTION WITH DDX60</scope>
</reference>
<reference key="16">
    <citation type="journal article" date="2013" name="J. Proteome Res.">
        <title>Toward a comprehensive characterization of a human cancer cell phosphoproteome.</title>
        <authorList>
            <person name="Zhou H."/>
            <person name="Di Palma S."/>
            <person name="Preisinger C."/>
            <person name="Peng M."/>
            <person name="Polat A.N."/>
            <person name="Heck A.J."/>
            <person name="Mohammed S."/>
        </authorList>
    </citation>
    <scope>PHOSPHORYLATION [LARGE SCALE ANALYSIS] AT SER-21 AND SER-98</scope>
    <scope>IDENTIFICATION BY MASS SPECTROMETRY [LARGE SCALE ANALYSIS]</scope>
    <source>
        <tissue>Cervix carcinoma</tissue>
        <tissue>Erythroleukemia</tissue>
    </source>
</reference>
<reference key="17">
    <citation type="journal article" date="2021" name="Clin. Genet.">
        <title>Bi-allelic missense variant, p.Ser35Leu in EXOSC1 is associated with pontocerebellar hypoplasia.</title>
        <authorList>
            <person name="Somashekar P.H."/>
            <person name="Kaur P."/>
            <person name="Stephen J."/>
            <person name="Guleria V.S."/>
            <person name="Kadavigere R."/>
            <person name="Girisha K.M."/>
            <person name="Bielas S."/>
            <person name="Upadhyai P."/>
            <person name="Shukla A."/>
        </authorList>
    </citation>
    <scope>INVOLVEMENT IN PCH1F</scope>
    <scope>VARIANT PCH1F LEU-35</scope>
    <scope>CHARACTERIZATION OF VARIANT PCH1F LEU-35</scope>
</reference>
<reference evidence="10" key="18">
    <citation type="journal article" date="2006" name="Cell">
        <title>Reconstitution, activities, and structure of the eukaryotic RNA exosome.</title>
        <authorList>
            <person name="Liu Q."/>
            <person name="Greimann J.C."/>
            <person name="Lima C.D."/>
        </authorList>
    </citation>
    <scope>X-RAY CRYSTALLOGRAPHY (3.35 ANGSTROMS)</scope>
    <scope>RECONSTITUTION OF THE RNA EXOSOME CORE COMPLEX</scope>
</reference>
<reference key="19">
    <citation type="journal article" date="2007" name="Cell">
        <authorList>
            <person name="Liu Q."/>
            <person name="Greimann J.C."/>
            <person name="Lima C.D."/>
        </authorList>
    </citation>
    <scope>ERRATUM OF PUBMED:17174896</scope>
</reference>
<reference evidence="11 12" key="20">
    <citation type="journal article" date="2018" name="Cell">
        <title>Helicase-Dependent RNA Decay Illuminated by a Cryo-EM Structure of a Human Nuclear RNA Exosome-MTR4 Complex.</title>
        <authorList>
            <person name="Weick E.M."/>
            <person name="Puno M.R."/>
            <person name="Januszyk K."/>
            <person name="Zinder J.C."/>
            <person name="DiMattia M.A."/>
            <person name="Lima C.D."/>
        </authorList>
    </citation>
    <scope>STRUCTURE BY ELECTRON MICROSCOPY (3.45 ANGSTROMS)</scope>
    <scope>SUBUNIT</scope>
</reference>
<reference evidence="13" key="21">
    <citation type="journal article" date="2018" name="Elife">
        <title>Distinct and evolutionary conserved structural features of the human nuclear exosome complex.</title>
        <authorList>
            <person name="Gerlach P."/>
            <person name="Schuller J.M."/>
            <person name="Bonneau F."/>
            <person name="Basquin J."/>
            <person name="Reichelt P."/>
            <person name="Falk S."/>
            <person name="Conti E."/>
        </authorList>
    </citation>
    <scope>STRUCTURE BY ELECTRON MICROSCOPY (3.80 ANGSTROMS) OF THE RNA EXOSOME COMPLEX IN COMPLEX WITH MPP6</scope>
    <scope>SUBUNIT</scope>
</reference>
<keyword id="KW-0002">3D-structure</keyword>
<keyword id="KW-0963">Cytoplasm</keyword>
<keyword id="KW-0225">Disease variant</keyword>
<keyword id="KW-0271">Exosome</keyword>
<keyword id="KW-0523">Neurodegeneration</keyword>
<keyword id="KW-0539">Nucleus</keyword>
<keyword id="KW-0597">Phosphoprotein</keyword>
<keyword id="KW-1267">Proteomics identification</keyword>
<keyword id="KW-1185">Reference proteome</keyword>
<keyword id="KW-0694">RNA-binding</keyword>
<keyword id="KW-0698">rRNA processing</keyword>
<name>EXOS1_HUMAN</name>
<sequence>MAPPVRYCIPGERLCNLEEGSPGSGTYTRHGYIFSSLAGCLMKSSENGALPVVSVVRETESQLLPDVGAIVTCKVSSINSRFAKVHILYVGSMPLKNSFRGTIRKEDVRATEKDKVEIYKSFRPGDIVLAKVISLGDAQSNYLLTTAENELGVVVAHSESGIQMVPISWCEMQCPKTHTKEFRKVARVQPEFLQT</sequence>
<feature type="chain" id="PRO_0000087127" description="Exosome complex component CSL4">
    <location>
        <begin position="1"/>
        <end position="195"/>
    </location>
</feature>
<feature type="domain" description="S1 motif">
    <location>
        <begin position="66"/>
        <end position="147"/>
    </location>
</feature>
<feature type="modified residue" description="Phosphoserine" evidence="14 15 16 17">
    <location>
        <position position="21"/>
    </location>
</feature>
<feature type="modified residue" description="Phosphoserine" evidence="17">
    <location>
        <position position="98"/>
    </location>
</feature>
<feature type="sequence variant" id="VAR_085726" description="In PCH1F; decreased protein abundance; dbSNP:rs2133168246." evidence="7">
    <original>S</original>
    <variation>L</variation>
    <location>
        <position position="35"/>
    </location>
</feature>
<feature type="strand" evidence="18">
    <location>
        <begin position="13"/>
        <end position="16"/>
    </location>
</feature>
<feature type="turn" evidence="18">
    <location>
        <begin position="17"/>
        <end position="19"/>
    </location>
</feature>
<feature type="strand" evidence="18">
    <location>
        <begin position="23"/>
        <end position="25"/>
    </location>
</feature>
<feature type="strand" evidence="18">
    <location>
        <begin position="27"/>
        <end position="29"/>
    </location>
</feature>
<feature type="strand" evidence="18">
    <location>
        <begin position="32"/>
        <end position="34"/>
    </location>
</feature>
<feature type="strand" evidence="18">
    <location>
        <begin position="41"/>
        <end position="45"/>
    </location>
</feature>
<feature type="strand" evidence="18">
    <location>
        <begin position="49"/>
        <end position="52"/>
    </location>
</feature>
<feature type="helix" evidence="19">
    <location>
        <begin position="58"/>
        <end position="60"/>
    </location>
</feature>
<feature type="strand" evidence="18">
    <location>
        <begin position="70"/>
        <end position="78"/>
    </location>
</feature>
<feature type="strand" evidence="18">
    <location>
        <begin position="80"/>
        <end position="93"/>
    </location>
</feature>
<feature type="strand" evidence="18">
    <location>
        <begin position="103"/>
        <end position="106"/>
    </location>
</feature>
<feature type="helix" evidence="18">
    <location>
        <begin position="107"/>
        <end position="109"/>
    </location>
</feature>
<feature type="helix" evidence="18">
    <location>
        <begin position="118"/>
        <end position="120"/>
    </location>
</feature>
<feature type="strand" evidence="18">
    <location>
        <begin position="124"/>
        <end position="135"/>
    </location>
</feature>
<feature type="strand" evidence="19">
    <location>
        <begin position="137"/>
        <end position="139"/>
    </location>
</feature>
<feature type="strand" evidence="18">
    <location>
        <begin position="142"/>
        <end position="145"/>
    </location>
</feature>
<feature type="strand" evidence="18">
    <location>
        <begin position="148"/>
        <end position="150"/>
    </location>
</feature>
<feature type="strand" evidence="19">
    <location>
        <begin position="152"/>
        <end position="155"/>
    </location>
</feature>
<feature type="strand" evidence="18">
    <location>
        <begin position="159"/>
        <end position="161"/>
    </location>
</feature>
<feature type="strand" evidence="18">
    <location>
        <begin position="165"/>
        <end position="168"/>
    </location>
</feature>
<feature type="strand" evidence="18">
    <location>
        <begin position="171"/>
        <end position="173"/>
    </location>
</feature>
<feature type="turn" evidence="18">
    <location>
        <begin position="175"/>
        <end position="178"/>
    </location>
</feature>